<sequence>MDSISSPSTSSSASSTPKLISEKCLVCFQPSHGNHFGVDSCRACAAFFRRVFVTHKQQFPCREGDNKCTPDEWGRWSCKRCRSDKCFALGMKPDNIQRDRDRFIFSDNFRDDRKRKTSESIVPLSVERFVGKQLVTTYTSTGSGKNIEYITFFDLTPIIKDADYILKRIPKLEKSVKVKSSLEQLAFGLQEVRKEQLFESVPELRKIGKMETWDNWVKGMRRAGEWIMHFEEFRQLEQEEKMVILKCMWHLFIRLERISMTAEMRRMKLCDDKEFIYGTEQRINYDTLEIDRDWFSEATDREVRSFIGPLPRWFCETIIDALMELRPSDVELSFMLCNLCFHLTGQKLGGRIQEITDRLQDVLANDLHKYYLAKDKYSRYSYRLTKLLSLNRQYKNDLEIRRQGIFLANTLNIFRVKLSHPEMFQFSC</sequence>
<feature type="chain" id="PRO_0000053782" description="Nuclear hormone receptor family member nhr-44">
    <location>
        <begin position="1"/>
        <end position="428"/>
    </location>
</feature>
<feature type="domain" description="NR LBD" evidence="2">
    <location>
        <begin position="181"/>
        <end position="427"/>
    </location>
</feature>
<feature type="DNA-binding region" description="Nuclear receptor" evidence="1">
    <location>
        <begin position="21"/>
        <end position="98"/>
    </location>
</feature>
<feature type="zinc finger region" description="NR C4-type" evidence="1">
    <location>
        <begin position="24"/>
        <end position="44"/>
    </location>
</feature>
<feature type="zinc finger region" description="NR C4-type" evidence="1">
    <location>
        <begin position="61"/>
        <end position="86"/>
    </location>
</feature>
<name>NHR44_CAEEL</name>
<keyword id="KW-0238">DNA-binding</keyword>
<keyword id="KW-0479">Metal-binding</keyword>
<keyword id="KW-0539">Nucleus</keyword>
<keyword id="KW-0675">Receptor</keyword>
<keyword id="KW-1185">Reference proteome</keyword>
<keyword id="KW-0804">Transcription</keyword>
<keyword id="KW-0805">Transcription regulation</keyword>
<keyword id="KW-0862">Zinc</keyword>
<keyword id="KW-0863">Zinc-finger</keyword>
<accession>Q22555</accession>
<accession>Q9GTH3</accession>
<organism>
    <name type="scientific">Caenorhabditis elegans</name>
    <dbReference type="NCBI Taxonomy" id="6239"/>
    <lineage>
        <taxon>Eukaryota</taxon>
        <taxon>Metazoa</taxon>
        <taxon>Ecdysozoa</taxon>
        <taxon>Nematoda</taxon>
        <taxon>Chromadorea</taxon>
        <taxon>Rhabditida</taxon>
        <taxon>Rhabditina</taxon>
        <taxon>Rhabditomorpha</taxon>
        <taxon>Rhabditoidea</taxon>
        <taxon>Rhabditidae</taxon>
        <taxon>Peloderinae</taxon>
        <taxon>Caenorhabditis</taxon>
    </lineage>
</organism>
<gene>
    <name type="primary">nhr-44</name>
    <name type="ORF">T19A5.4</name>
</gene>
<protein>
    <recommendedName>
        <fullName>Nuclear hormone receptor family member nhr-44</fullName>
    </recommendedName>
</protein>
<evidence type="ECO:0000255" key="1">
    <source>
        <dbReference type="PROSITE-ProRule" id="PRU00407"/>
    </source>
</evidence>
<evidence type="ECO:0000255" key="2">
    <source>
        <dbReference type="PROSITE-ProRule" id="PRU01189"/>
    </source>
</evidence>
<evidence type="ECO:0000305" key="3"/>
<reference key="1">
    <citation type="journal article" date="1998" name="Science">
        <title>Genome sequence of the nematode C. elegans: a platform for investigating biology.</title>
        <authorList>
            <consortium name="The C. elegans sequencing consortium"/>
        </authorList>
    </citation>
    <scope>NUCLEOTIDE SEQUENCE [LARGE SCALE GENOMIC DNA]</scope>
    <source>
        <strain>Bristol N2</strain>
    </source>
</reference>
<reference key="2">
    <citation type="journal article" date="2005" name="J. Mol. Evol.">
        <title>Explosive lineage-specific expansion of the orphan nuclear receptor HNF4 in nematodes.</title>
        <authorList>
            <person name="Robinson-Rechavi M."/>
            <person name="Maina C.V."/>
            <person name="Gissendanner C.R."/>
            <person name="Laudet V."/>
            <person name="Sluder A."/>
        </authorList>
    </citation>
    <scope>NUCLEOTIDE SEQUENCE [MRNA] OF 6-428</scope>
</reference>
<proteinExistence type="evidence at transcript level"/>
<comment type="function">
    <text>Orphan nuclear receptor.</text>
</comment>
<comment type="subcellular location">
    <subcellularLocation>
        <location evidence="1">Nucleus</location>
    </subcellularLocation>
</comment>
<comment type="similarity">
    <text evidence="3">Belongs to the nuclear hormone receptor family.</text>
</comment>
<dbReference type="EMBL" id="FO081517">
    <property type="protein sequence ID" value="CCD72156.1"/>
    <property type="molecule type" value="Genomic_DNA"/>
</dbReference>
<dbReference type="EMBL" id="AF273785">
    <property type="protein sequence ID" value="AAG15134.1"/>
    <property type="molecule type" value="mRNA"/>
</dbReference>
<dbReference type="PIR" id="T34358">
    <property type="entry name" value="T34358"/>
</dbReference>
<dbReference type="RefSeq" id="NP_505313.1">
    <property type="nucleotide sequence ID" value="NM_072912.8"/>
</dbReference>
<dbReference type="BioGRID" id="44314">
    <property type="interactions" value="1"/>
</dbReference>
<dbReference type="FunCoup" id="Q22555">
    <property type="interactions" value="335"/>
</dbReference>
<dbReference type="PaxDb" id="6239-T19A5.4"/>
<dbReference type="EnsemblMetazoa" id="T19A5.4.1">
    <property type="protein sequence ID" value="T19A5.4.1"/>
    <property type="gene ID" value="WBGene00003634"/>
</dbReference>
<dbReference type="GeneID" id="179276"/>
<dbReference type="KEGG" id="cel:CELE_T19A5.4"/>
<dbReference type="UCSC" id="T19A5.4">
    <property type="organism name" value="c. elegans"/>
</dbReference>
<dbReference type="AGR" id="WB:WBGene00003634"/>
<dbReference type="CTD" id="179276"/>
<dbReference type="WormBase" id="T19A5.4">
    <property type="protein sequence ID" value="CE13732"/>
    <property type="gene ID" value="WBGene00003634"/>
    <property type="gene designation" value="nhr-44"/>
</dbReference>
<dbReference type="eggNOG" id="KOG3575">
    <property type="taxonomic scope" value="Eukaryota"/>
</dbReference>
<dbReference type="GeneTree" id="ENSGT00940000164378"/>
<dbReference type="HOGENOM" id="CLU_007368_7_1_1"/>
<dbReference type="InParanoid" id="Q22555"/>
<dbReference type="OMA" id="WIMHFEE"/>
<dbReference type="OrthoDB" id="5816380at2759"/>
<dbReference type="PhylomeDB" id="Q22555"/>
<dbReference type="PRO" id="PR:Q22555"/>
<dbReference type="Proteomes" id="UP000001940">
    <property type="component" value="Chromosome V"/>
</dbReference>
<dbReference type="Bgee" id="WBGene00003634">
    <property type="expression patterns" value="Expressed in pharyngeal muscle cell (C elegans) and 3 other cell types or tissues"/>
</dbReference>
<dbReference type="GO" id="GO:0005634">
    <property type="term" value="C:nucleus"/>
    <property type="evidence" value="ECO:0007669"/>
    <property type="project" value="UniProtKB-SubCell"/>
</dbReference>
<dbReference type="GO" id="GO:0003700">
    <property type="term" value="F:DNA-binding transcription factor activity"/>
    <property type="evidence" value="ECO:0007669"/>
    <property type="project" value="InterPro"/>
</dbReference>
<dbReference type="GO" id="GO:0000978">
    <property type="term" value="F:RNA polymerase II cis-regulatory region sequence-specific DNA binding"/>
    <property type="evidence" value="ECO:0007669"/>
    <property type="project" value="InterPro"/>
</dbReference>
<dbReference type="GO" id="GO:0008270">
    <property type="term" value="F:zinc ion binding"/>
    <property type="evidence" value="ECO:0007669"/>
    <property type="project" value="UniProtKB-KW"/>
</dbReference>
<dbReference type="CDD" id="cd06960">
    <property type="entry name" value="NR_DBD_HNF4A"/>
    <property type="match status" value="1"/>
</dbReference>
<dbReference type="Gene3D" id="3.30.50.10">
    <property type="entry name" value="Erythroid Transcription Factor GATA-1, subunit A"/>
    <property type="match status" value="1"/>
</dbReference>
<dbReference type="Gene3D" id="1.10.565.10">
    <property type="entry name" value="Retinoid X Receptor"/>
    <property type="match status" value="1"/>
</dbReference>
<dbReference type="InterPro" id="IPR051152">
    <property type="entry name" value="C.elegans_Orphan_NR"/>
</dbReference>
<dbReference type="InterPro" id="IPR049636">
    <property type="entry name" value="HNF4-like_DBD"/>
</dbReference>
<dbReference type="InterPro" id="IPR035500">
    <property type="entry name" value="NHR-like_dom_sf"/>
</dbReference>
<dbReference type="InterPro" id="IPR000536">
    <property type="entry name" value="Nucl_hrmn_rcpt_lig-bd"/>
</dbReference>
<dbReference type="InterPro" id="IPR001628">
    <property type="entry name" value="Znf_hrmn_rcpt"/>
</dbReference>
<dbReference type="InterPro" id="IPR013088">
    <property type="entry name" value="Znf_NHR/GATA"/>
</dbReference>
<dbReference type="PANTHER" id="PTHR45680">
    <property type="entry name" value="NUCLEAR HORMONE RECEPTOR FAMILY"/>
    <property type="match status" value="1"/>
</dbReference>
<dbReference type="PANTHER" id="PTHR45680:SF6">
    <property type="entry name" value="NUCLEAR HORMONE RECEPTOR FAMILY-RELATED"/>
    <property type="match status" value="1"/>
</dbReference>
<dbReference type="Pfam" id="PF00104">
    <property type="entry name" value="Hormone_recep"/>
    <property type="match status" value="1"/>
</dbReference>
<dbReference type="Pfam" id="PF00105">
    <property type="entry name" value="zf-C4"/>
    <property type="match status" value="1"/>
</dbReference>
<dbReference type="PRINTS" id="PR00047">
    <property type="entry name" value="STROIDFINGER"/>
</dbReference>
<dbReference type="SMART" id="SM00430">
    <property type="entry name" value="HOLI"/>
    <property type="match status" value="1"/>
</dbReference>
<dbReference type="SMART" id="SM00399">
    <property type="entry name" value="ZnF_C4"/>
    <property type="match status" value="1"/>
</dbReference>
<dbReference type="SUPFAM" id="SSF57716">
    <property type="entry name" value="Glucocorticoid receptor-like (DNA-binding domain)"/>
    <property type="match status" value="1"/>
</dbReference>
<dbReference type="SUPFAM" id="SSF48508">
    <property type="entry name" value="Nuclear receptor ligand-binding domain"/>
    <property type="match status" value="1"/>
</dbReference>
<dbReference type="PROSITE" id="PS51843">
    <property type="entry name" value="NR_LBD"/>
    <property type="match status" value="1"/>
</dbReference>
<dbReference type="PROSITE" id="PS00031">
    <property type="entry name" value="NUCLEAR_REC_DBD_1"/>
    <property type="match status" value="1"/>
</dbReference>
<dbReference type="PROSITE" id="PS51030">
    <property type="entry name" value="NUCLEAR_REC_DBD_2"/>
    <property type="match status" value="1"/>
</dbReference>